<organism>
    <name type="scientific">Mycobacterium tuberculosis (strain ATCC 25618 / H37Rv)</name>
    <dbReference type="NCBI Taxonomy" id="83332"/>
    <lineage>
        <taxon>Bacteria</taxon>
        <taxon>Bacillati</taxon>
        <taxon>Actinomycetota</taxon>
        <taxon>Actinomycetes</taxon>
        <taxon>Mycobacteriales</taxon>
        <taxon>Mycobacteriaceae</taxon>
        <taxon>Mycobacterium</taxon>
        <taxon>Mycobacterium tuberculosis complex</taxon>
    </lineage>
</organism>
<gene>
    <name type="ordered locus">Rv1220c</name>
</gene>
<feature type="chain" id="PRO_0000380105" description="Probable O-methyltransferase Rv1220c">
    <location>
        <begin position="1"/>
        <end position="224"/>
    </location>
</feature>
<feature type="region of interest" description="Disordered" evidence="2">
    <location>
        <begin position="1"/>
        <end position="21"/>
    </location>
</feature>
<feature type="compositionally biased region" description="Basic and acidic residues" evidence="2">
    <location>
        <begin position="1"/>
        <end position="10"/>
    </location>
</feature>
<feature type="active site" description="Proton acceptor" evidence="7">
    <location>
        <position position="173"/>
    </location>
</feature>
<feature type="binding site" evidence="1 4 8">
    <location>
        <position position="51"/>
    </location>
    <ligand>
        <name>S-adenosyl-L-methionine</name>
        <dbReference type="ChEBI" id="CHEBI:59789"/>
    </ligand>
</feature>
<feature type="binding site" evidence="8">
    <location>
        <position position="75"/>
    </location>
    <ligand>
        <name>S-adenosyl-L-methionine</name>
        <dbReference type="ChEBI" id="CHEBI:59789"/>
    </ligand>
</feature>
<feature type="binding site" evidence="8">
    <location>
        <begin position="80"/>
        <end position="81"/>
    </location>
    <ligand>
        <name>S-adenosyl-L-methionine</name>
        <dbReference type="ChEBI" id="CHEBI:59789"/>
    </ligand>
</feature>
<feature type="binding site" evidence="4 8">
    <location>
        <position position="81"/>
    </location>
    <ligand>
        <name>S-adenosyl-L-methionine</name>
        <dbReference type="ChEBI" id="CHEBI:59789"/>
    </ligand>
</feature>
<feature type="binding site" evidence="8">
    <location>
        <begin position="99"/>
        <end position="100"/>
    </location>
    <ligand>
        <name>S-adenosyl-L-methionine</name>
        <dbReference type="ChEBI" id="CHEBI:59789"/>
    </ligand>
</feature>
<feature type="binding site" evidence="4 8">
    <location>
        <position position="99"/>
    </location>
    <ligand>
        <name>S-adenosyl-L-methionine</name>
        <dbReference type="ChEBI" id="CHEBI:59789"/>
    </ligand>
</feature>
<feature type="binding site" evidence="4 8">
    <location>
        <position position="104"/>
    </location>
    <ligand>
        <name>S-adenosyl-L-methionine</name>
        <dbReference type="ChEBI" id="CHEBI:59789"/>
    </ligand>
</feature>
<feature type="binding site" evidence="8">
    <location>
        <begin position="129"/>
        <end position="130"/>
    </location>
    <ligand>
        <name>S-adenosyl-L-methionine</name>
        <dbReference type="ChEBI" id="CHEBI:59789"/>
    </ligand>
</feature>
<feature type="binding site" evidence="4 8">
    <location>
        <position position="129"/>
    </location>
    <ligand>
        <name>S-adenosyl-L-methionine</name>
        <dbReference type="ChEBI" id="CHEBI:59789"/>
    </ligand>
</feature>
<feature type="binding site" evidence="4 8">
    <location>
        <position position="147"/>
    </location>
    <ligand>
        <name>S-adenosyl-L-methionine</name>
        <dbReference type="ChEBI" id="CHEBI:59789"/>
    </ligand>
</feature>
<feature type="binding site" evidence="8">
    <location>
        <position position="156"/>
    </location>
    <ligand>
        <name>S-adenosyl-L-methionine</name>
        <dbReference type="ChEBI" id="CHEBI:59789"/>
    </ligand>
</feature>
<feature type="helix" evidence="9">
    <location>
        <begin position="21"/>
        <end position="27"/>
    </location>
</feature>
<feature type="helix" evidence="9">
    <location>
        <begin position="34"/>
        <end position="45"/>
    </location>
</feature>
<feature type="helix" evidence="9">
    <location>
        <begin position="53"/>
        <end position="66"/>
    </location>
</feature>
<feature type="strand" evidence="9">
    <location>
        <begin position="68"/>
        <end position="74"/>
    </location>
</feature>
<feature type="helix" evidence="9">
    <location>
        <begin position="80"/>
        <end position="86"/>
    </location>
</feature>
<feature type="strand" evidence="9">
    <location>
        <begin position="94"/>
        <end position="100"/>
    </location>
</feature>
<feature type="helix" evidence="9">
    <location>
        <begin position="102"/>
        <end position="114"/>
    </location>
</feature>
<feature type="helix" evidence="9">
    <location>
        <begin position="119"/>
        <end position="121"/>
    </location>
</feature>
<feature type="strand" evidence="9">
    <location>
        <begin position="122"/>
        <end position="127"/>
    </location>
</feature>
<feature type="helix" evidence="9">
    <location>
        <begin position="129"/>
        <end position="135"/>
    </location>
</feature>
<feature type="strand" evidence="9">
    <location>
        <begin position="141"/>
        <end position="146"/>
    </location>
</feature>
<feature type="helix" evidence="9">
    <location>
        <begin position="150"/>
        <end position="152"/>
    </location>
</feature>
<feature type="helix" evidence="9">
    <location>
        <begin position="153"/>
        <end position="163"/>
    </location>
</feature>
<feature type="strand" evidence="9">
    <location>
        <begin position="164"/>
        <end position="174"/>
    </location>
</feature>
<feature type="helix" evidence="9">
    <location>
        <begin position="189"/>
        <end position="202"/>
    </location>
</feature>
<feature type="strand" evidence="9">
    <location>
        <begin position="207"/>
        <end position="212"/>
    </location>
</feature>
<feature type="strand" evidence="9">
    <location>
        <begin position="218"/>
        <end position="223"/>
    </location>
</feature>
<accession>P9WJZ7</accession>
<accession>L0T607</accession>
<accession>O33219</accession>
<accession>Q7D8K9</accession>
<dbReference type="EC" id="2.1.1.-"/>
<dbReference type="EMBL" id="AL123456">
    <property type="protein sequence ID" value="CCP43976.1"/>
    <property type="status" value="ALT_INIT"/>
    <property type="molecule type" value="Genomic_DNA"/>
</dbReference>
<dbReference type="PIR" id="G70507">
    <property type="entry name" value="G70507"/>
</dbReference>
<dbReference type="RefSeq" id="NP_215736.1">
    <property type="nucleotide sequence ID" value="NC_000962.3"/>
</dbReference>
<dbReference type="RefSeq" id="WP_003911448.1">
    <property type="nucleotide sequence ID" value="NZ_NVQJ01000039.1"/>
</dbReference>
<dbReference type="PDB" id="5X7F">
    <property type="method" value="X-ray"/>
    <property type="resolution" value="2.00 A"/>
    <property type="chains" value="A=10-224"/>
</dbReference>
<dbReference type="PDBsum" id="5X7F"/>
<dbReference type="SMR" id="P9WJZ7"/>
<dbReference type="FunCoup" id="P9WJZ7">
    <property type="interactions" value="25"/>
</dbReference>
<dbReference type="STRING" id="83332.Rv1220c"/>
<dbReference type="PaxDb" id="83332-Rv1220c"/>
<dbReference type="GeneID" id="888419"/>
<dbReference type="KEGG" id="mtu:Rv1220c"/>
<dbReference type="PATRIC" id="fig|83332.12.peg.1368"/>
<dbReference type="TubercuList" id="Rv1220c"/>
<dbReference type="eggNOG" id="COG4122">
    <property type="taxonomic scope" value="Bacteria"/>
</dbReference>
<dbReference type="InParanoid" id="P9WJZ7"/>
<dbReference type="OrthoDB" id="4774874at2"/>
<dbReference type="Proteomes" id="UP000001584">
    <property type="component" value="Chromosome"/>
</dbReference>
<dbReference type="GO" id="GO:0009274">
    <property type="term" value="C:peptidoglycan-based cell wall"/>
    <property type="evidence" value="ECO:0007005"/>
    <property type="project" value="MTBBASE"/>
</dbReference>
<dbReference type="GO" id="GO:0005886">
    <property type="term" value="C:plasma membrane"/>
    <property type="evidence" value="ECO:0007005"/>
    <property type="project" value="MTBBASE"/>
</dbReference>
<dbReference type="GO" id="GO:0008171">
    <property type="term" value="F:O-methyltransferase activity"/>
    <property type="evidence" value="ECO:0007669"/>
    <property type="project" value="InterPro"/>
</dbReference>
<dbReference type="GO" id="GO:0008757">
    <property type="term" value="F:S-adenosylmethionine-dependent methyltransferase activity"/>
    <property type="evidence" value="ECO:0000318"/>
    <property type="project" value="GO_Central"/>
</dbReference>
<dbReference type="GO" id="GO:0032259">
    <property type="term" value="P:methylation"/>
    <property type="evidence" value="ECO:0007669"/>
    <property type="project" value="UniProtKB-KW"/>
</dbReference>
<dbReference type="CDD" id="cd02440">
    <property type="entry name" value="AdoMet_MTases"/>
    <property type="match status" value="1"/>
</dbReference>
<dbReference type="FunFam" id="3.40.50.150:FF:000374">
    <property type="entry name" value="Putative methyltransferase"/>
    <property type="match status" value="1"/>
</dbReference>
<dbReference type="Gene3D" id="3.40.50.150">
    <property type="entry name" value="Vaccinia Virus protein VP39"/>
    <property type="match status" value="1"/>
</dbReference>
<dbReference type="InterPro" id="IPR050362">
    <property type="entry name" value="Cation-dep_OMT"/>
</dbReference>
<dbReference type="InterPro" id="IPR029063">
    <property type="entry name" value="SAM-dependent_MTases_sf"/>
</dbReference>
<dbReference type="InterPro" id="IPR002935">
    <property type="entry name" value="SAM_O-MeTrfase"/>
</dbReference>
<dbReference type="PANTHER" id="PTHR10509:SF85">
    <property type="entry name" value="O-METHYLTRANSFERASE RV1220C-RELATED"/>
    <property type="match status" value="1"/>
</dbReference>
<dbReference type="PANTHER" id="PTHR10509">
    <property type="entry name" value="O-METHYLTRANSFERASE-RELATED"/>
    <property type="match status" value="1"/>
</dbReference>
<dbReference type="Pfam" id="PF01596">
    <property type="entry name" value="Methyltransf_3"/>
    <property type="match status" value="1"/>
</dbReference>
<dbReference type="SUPFAM" id="SSF53335">
    <property type="entry name" value="S-adenosyl-L-methionine-dependent methyltransferases"/>
    <property type="match status" value="1"/>
</dbReference>
<dbReference type="PROSITE" id="PS51682">
    <property type="entry name" value="SAM_OMT_I"/>
    <property type="match status" value="1"/>
</dbReference>
<sequence length="224" mass="23033">MDGTPGHDDMPGQPAPSRGESLWAHAEGSISEDVILAGARERATDIGAGAVTPAVGALLCLLAKLSGGKAVAEVGTGAGVSGLWLLSGMRDDGVLTTIDIEPEHLRLARQAFAEAGIGPSRTRLISGRAQEVLTRLADASYDLVFIDADPIDQPDYVAEGVRLLRSGGVIVVHRAALGGRAGDPGARDAEVIAVREAARLIAEDERLTPALVPLGDGVLAAVRD</sequence>
<keyword id="KW-0002">3D-structure</keyword>
<keyword id="KW-0489">Methyltransferase</keyword>
<keyword id="KW-1185">Reference proteome</keyword>
<keyword id="KW-0949">S-adenosyl-L-methionine</keyword>
<keyword id="KW-0808">Transferase</keyword>
<proteinExistence type="evidence at protein level"/>
<protein>
    <recommendedName>
        <fullName evidence="6">Probable O-methyltransferase Rv1220c</fullName>
        <shortName evidence="5">MtbOMT</shortName>
        <ecNumber>2.1.1.-</ecNumber>
    </recommendedName>
</protein>
<evidence type="ECO:0000255" key="1">
    <source>
        <dbReference type="PROSITE-ProRule" id="PRU01019"/>
    </source>
</evidence>
<evidence type="ECO:0000256" key="2">
    <source>
        <dbReference type="SAM" id="MobiDB-lite"/>
    </source>
</evidence>
<evidence type="ECO:0000269" key="3">
    <source>
    </source>
</evidence>
<evidence type="ECO:0000269" key="4">
    <source>
    </source>
</evidence>
<evidence type="ECO:0000303" key="5">
    <source>
    </source>
</evidence>
<evidence type="ECO:0000305" key="6"/>
<evidence type="ECO:0000305" key="7">
    <source>
    </source>
</evidence>
<evidence type="ECO:0007744" key="8">
    <source>
        <dbReference type="PDB" id="5X7F"/>
    </source>
</evidence>
<evidence type="ECO:0007829" key="9">
    <source>
        <dbReference type="PDB" id="5X7F"/>
    </source>
</evidence>
<comment type="function">
    <text evidence="7">Probably specifically methylates an O atom of its substrate.</text>
</comment>
<comment type="cofactor">
    <text evidence="4">Does not seem to have metal cofactors; no metal ions were found via inductively coupled plasma atomic emission spectroscopy, and the residues that bind metal in homologs are not conserved.</text>
</comment>
<comment type="subunit">
    <text evidence="4">Homodimer.</text>
</comment>
<comment type="miscellaneous">
    <text evidence="3">Was identified as a high-confidence drug target.</text>
</comment>
<comment type="similarity">
    <text evidence="1">Belongs to the class I-like SAM-binding methyltransferase superfamily. Cation-dependent O-methyltransferase family.</text>
</comment>
<comment type="caution">
    <text evidence="6">It is not clear if Met-1 or Met-10 is the start codon.</text>
</comment>
<comment type="sequence caution">
    <conflict type="erroneous initiation">
        <sequence resource="EMBL-CDS" id="CCP43976"/>
    </conflict>
    <text>Truncated N-terminus.</text>
</comment>
<name>Y1220_MYCTU</name>
<reference key="1">
    <citation type="journal article" date="1998" name="Nature">
        <title>Deciphering the biology of Mycobacterium tuberculosis from the complete genome sequence.</title>
        <authorList>
            <person name="Cole S.T."/>
            <person name="Brosch R."/>
            <person name="Parkhill J."/>
            <person name="Garnier T."/>
            <person name="Churcher C.M."/>
            <person name="Harris D.E."/>
            <person name="Gordon S.V."/>
            <person name="Eiglmeier K."/>
            <person name="Gas S."/>
            <person name="Barry C.E. III"/>
            <person name="Tekaia F."/>
            <person name="Badcock K."/>
            <person name="Basham D."/>
            <person name="Brown D."/>
            <person name="Chillingworth T."/>
            <person name="Connor R."/>
            <person name="Davies R.M."/>
            <person name="Devlin K."/>
            <person name="Feltwell T."/>
            <person name="Gentles S."/>
            <person name="Hamlin N."/>
            <person name="Holroyd S."/>
            <person name="Hornsby T."/>
            <person name="Jagels K."/>
            <person name="Krogh A."/>
            <person name="McLean J."/>
            <person name="Moule S."/>
            <person name="Murphy L.D."/>
            <person name="Oliver S."/>
            <person name="Osborne J."/>
            <person name="Quail M.A."/>
            <person name="Rajandream M.A."/>
            <person name="Rogers J."/>
            <person name="Rutter S."/>
            <person name="Seeger K."/>
            <person name="Skelton S."/>
            <person name="Squares S."/>
            <person name="Squares R."/>
            <person name="Sulston J.E."/>
            <person name="Taylor K."/>
            <person name="Whitehead S."/>
            <person name="Barrell B.G."/>
        </authorList>
    </citation>
    <scope>NUCLEOTIDE SEQUENCE [LARGE SCALE GENOMIC DNA]</scope>
    <source>
        <strain>ATCC 25618 / H37Rv</strain>
    </source>
</reference>
<reference key="2">
    <citation type="journal article" date="2008" name="BMC Syst. Biol.">
        <title>targetTB: a target identification pipeline for Mycobacterium tuberculosis through an interactome, reactome and genome-scale structural analysis.</title>
        <authorList>
            <person name="Raman K."/>
            <person name="Yeturu K."/>
            <person name="Chandra N."/>
        </authorList>
    </citation>
    <scope>IDENTIFICATION AS A DRUG TARGET [LARGE SCALE ANALYSIS]</scope>
</reference>
<reference key="3">
    <citation type="journal article" date="2011" name="Mol. Cell. Proteomics">
        <title>Proteogenomic analysis of Mycobacterium tuberculosis by high resolution mass spectrometry.</title>
        <authorList>
            <person name="Kelkar D.S."/>
            <person name="Kumar D."/>
            <person name="Kumar P."/>
            <person name="Balakrishnan L."/>
            <person name="Muthusamy B."/>
            <person name="Yadav A.K."/>
            <person name="Shrivastava P."/>
            <person name="Marimuthu A."/>
            <person name="Anand S."/>
            <person name="Sundaram H."/>
            <person name="Kingsbury R."/>
            <person name="Harsha H.C."/>
            <person name="Nair B."/>
            <person name="Prasad T.S."/>
            <person name="Chauhan D.S."/>
            <person name="Katoch K."/>
            <person name="Katoch V.M."/>
            <person name="Kumar P."/>
            <person name="Chaerkady R."/>
            <person name="Ramachandran S."/>
            <person name="Dash D."/>
            <person name="Pandey A."/>
        </authorList>
    </citation>
    <scope>IDENTIFICATION BY MASS SPECTROMETRY [LARGE SCALE ANALYSIS]</scope>
    <source>
        <strain>ATCC 25618 / H37Rv</strain>
    </source>
</reference>
<reference evidence="8" key="4">
    <citation type="journal article" date="2017" name="Acta Crystallogr. F Struct. Biol. Commun.">
        <title>Crystal structure of Rv1220c, a SAM-dependent O-methyltransferase from Mycobacterium tuberculosis.</title>
        <authorList>
            <person name="Yan Q."/>
            <person name="Shaw N."/>
            <person name="Qian L."/>
            <person name="Jiang D."/>
        </authorList>
    </citation>
    <scope>X-RAY CRYSTALLOGRAPHY (2.00 ANGSTROMS) OF 10-224 IN COMPLEX WITH S-ADENOSYL-L-METHIONINE</scope>
    <scope>PROBABLE FUNCTION</scope>
    <scope>NO METAL COFACTOR</scope>
    <scope>SUBUNIT</scope>
    <scope>PROBABLE ACTIVE SITE</scope>
    <source>
        <strain>ATCC 25618 / H37Rv</strain>
    </source>
</reference>